<accession>Q2YNC8</accession>
<proteinExistence type="inferred from homology"/>
<reference key="1">
    <citation type="journal article" date="2005" name="Infect. Immun.">
        <title>Whole-genome analyses of speciation events in pathogenic Brucellae.</title>
        <authorList>
            <person name="Chain P.S."/>
            <person name="Comerci D.J."/>
            <person name="Tolmasky M.E."/>
            <person name="Larimer F.W."/>
            <person name="Malfatti S.A."/>
            <person name="Vergez L.M."/>
            <person name="Aguero F."/>
            <person name="Land M.L."/>
            <person name="Ugalde R.A."/>
            <person name="Garcia E."/>
        </authorList>
    </citation>
    <scope>NUCLEOTIDE SEQUENCE [LARGE SCALE GENOMIC DNA]</scope>
    <source>
        <strain>2308</strain>
    </source>
</reference>
<dbReference type="EC" id="7.1.1.-" evidence="2"/>
<dbReference type="EMBL" id="AM040264">
    <property type="protein sequence ID" value="CAJ10779.1"/>
    <property type="molecule type" value="Genomic_DNA"/>
</dbReference>
<dbReference type="RefSeq" id="WP_002963938.1">
    <property type="nucleotide sequence ID" value="NZ_KN046823.1"/>
</dbReference>
<dbReference type="SMR" id="Q2YNC8"/>
<dbReference type="STRING" id="359391.BAB1_0823"/>
<dbReference type="KEGG" id="bmf:BAB1_0823"/>
<dbReference type="PATRIC" id="fig|359391.11.peg.3133"/>
<dbReference type="HOGENOM" id="CLU_055737_7_3_5"/>
<dbReference type="PhylomeDB" id="Q2YNC8"/>
<dbReference type="Proteomes" id="UP000002719">
    <property type="component" value="Chromosome I"/>
</dbReference>
<dbReference type="GO" id="GO:0005886">
    <property type="term" value="C:plasma membrane"/>
    <property type="evidence" value="ECO:0007669"/>
    <property type="project" value="UniProtKB-SubCell"/>
</dbReference>
<dbReference type="GO" id="GO:0045271">
    <property type="term" value="C:respiratory chain complex I"/>
    <property type="evidence" value="ECO:0007669"/>
    <property type="project" value="TreeGrafter"/>
</dbReference>
<dbReference type="GO" id="GO:0051539">
    <property type="term" value="F:4 iron, 4 sulfur cluster binding"/>
    <property type="evidence" value="ECO:0007669"/>
    <property type="project" value="UniProtKB-KW"/>
</dbReference>
<dbReference type="GO" id="GO:0005506">
    <property type="term" value="F:iron ion binding"/>
    <property type="evidence" value="ECO:0007669"/>
    <property type="project" value="UniProtKB-UniRule"/>
</dbReference>
<dbReference type="GO" id="GO:0008137">
    <property type="term" value="F:NADH dehydrogenase (ubiquinone) activity"/>
    <property type="evidence" value="ECO:0007669"/>
    <property type="project" value="InterPro"/>
</dbReference>
<dbReference type="GO" id="GO:0050136">
    <property type="term" value="F:NADH:ubiquinone reductase (non-electrogenic) activity"/>
    <property type="evidence" value="ECO:0007669"/>
    <property type="project" value="UniProtKB-UniRule"/>
</dbReference>
<dbReference type="GO" id="GO:0048038">
    <property type="term" value="F:quinone binding"/>
    <property type="evidence" value="ECO:0007669"/>
    <property type="project" value="UniProtKB-KW"/>
</dbReference>
<dbReference type="GO" id="GO:0009060">
    <property type="term" value="P:aerobic respiration"/>
    <property type="evidence" value="ECO:0007669"/>
    <property type="project" value="TreeGrafter"/>
</dbReference>
<dbReference type="GO" id="GO:0015990">
    <property type="term" value="P:electron transport coupled proton transport"/>
    <property type="evidence" value="ECO:0007669"/>
    <property type="project" value="TreeGrafter"/>
</dbReference>
<dbReference type="FunFam" id="3.40.50.12280:FF:000001">
    <property type="entry name" value="NADH-quinone oxidoreductase subunit B 2"/>
    <property type="match status" value="1"/>
</dbReference>
<dbReference type="Gene3D" id="3.40.50.12280">
    <property type="match status" value="1"/>
</dbReference>
<dbReference type="HAMAP" id="MF_01356">
    <property type="entry name" value="NDH1_NuoB"/>
    <property type="match status" value="1"/>
</dbReference>
<dbReference type="InterPro" id="IPR006137">
    <property type="entry name" value="NADH_UbQ_OxRdtase-like_20kDa"/>
</dbReference>
<dbReference type="InterPro" id="IPR006138">
    <property type="entry name" value="NADH_UQ_OxRdtase_20Kd_su"/>
</dbReference>
<dbReference type="NCBIfam" id="TIGR01957">
    <property type="entry name" value="nuoB_fam"/>
    <property type="match status" value="1"/>
</dbReference>
<dbReference type="NCBIfam" id="NF005012">
    <property type="entry name" value="PRK06411.1"/>
    <property type="match status" value="1"/>
</dbReference>
<dbReference type="PANTHER" id="PTHR11995">
    <property type="entry name" value="NADH DEHYDROGENASE"/>
    <property type="match status" value="1"/>
</dbReference>
<dbReference type="PANTHER" id="PTHR11995:SF14">
    <property type="entry name" value="NADH DEHYDROGENASE [UBIQUINONE] IRON-SULFUR PROTEIN 7, MITOCHONDRIAL"/>
    <property type="match status" value="1"/>
</dbReference>
<dbReference type="Pfam" id="PF01058">
    <property type="entry name" value="Oxidored_q6"/>
    <property type="match status" value="1"/>
</dbReference>
<dbReference type="SUPFAM" id="SSF56770">
    <property type="entry name" value="HydA/Nqo6-like"/>
    <property type="match status" value="1"/>
</dbReference>
<dbReference type="PROSITE" id="PS01150">
    <property type="entry name" value="COMPLEX1_20K"/>
    <property type="match status" value="1"/>
</dbReference>
<evidence type="ECO:0000250" key="1"/>
<evidence type="ECO:0000255" key="2">
    <source>
        <dbReference type="HAMAP-Rule" id="MF_01356"/>
    </source>
</evidence>
<sequence length="193" mass="21036">MGLTGTNTTLVAPQPKGILDPRTGKTVGSDDAFFNDLNGELSDKGFIVTSADALITWARTGSLMWMTFGLACCAVEMMHISMPRYDAERFGIAPRASPRQSDVMIVAGTLTNKMAPALRKVYDQMPEPRYVISMGSCANGGGYYHYSYSVVRGCDRVVPVDIYVPGCPPTAEALLYGILLLQKKIRRTGTIER</sequence>
<feature type="chain" id="PRO_0000358356" description="NADH-quinone oxidoreductase subunit B">
    <location>
        <begin position="1"/>
        <end position="193"/>
    </location>
</feature>
<feature type="binding site" evidence="2">
    <location>
        <position position="72"/>
    </location>
    <ligand>
        <name>[4Fe-4S] cluster</name>
        <dbReference type="ChEBI" id="CHEBI:49883"/>
    </ligand>
</feature>
<feature type="binding site" evidence="2">
    <location>
        <position position="73"/>
    </location>
    <ligand>
        <name>[4Fe-4S] cluster</name>
        <dbReference type="ChEBI" id="CHEBI:49883"/>
    </ligand>
</feature>
<feature type="binding site" evidence="2">
    <location>
        <position position="137"/>
    </location>
    <ligand>
        <name>[4Fe-4S] cluster</name>
        <dbReference type="ChEBI" id="CHEBI:49883"/>
    </ligand>
</feature>
<feature type="binding site" evidence="2">
    <location>
        <position position="167"/>
    </location>
    <ligand>
        <name>[4Fe-4S] cluster</name>
        <dbReference type="ChEBI" id="CHEBI:49883"/>
    </ligand>
</feature>
<protein>
    <recommendedName>
        <fullName evidence="2">NADH-quinone oxidoreductase subunit B</fullName>
        <ecNumber evidence="2">7.1.1.-</ecNumber>
    </recommendedName>
    <alternativeName>
        <fullName evidence="2">NADH dehydrogenase I subunit B</fullName>
    </alternativeName>
    <alternativeName>
        <fullName evidence="2">NDH-1 subunit B</fullName>
    </alternativeName>
</protein>
<organism>
    <name type="scientific">Brucella abortus (strain 2308)</name>
    <dbReference type="NCBI Taxonomy" id="359391"/>
    <lineage>
        <taxon>Bacteria</taxon>
        <taxon>Pseudomonadati</taxon>
        <taxon>Pseudomonadota</taxon>
        <taxon>Alphaproteobacteria</taxon>
        <taxon>Hyphomicrobiales</taxon>
        <taxon>Brucellaceae</taxon>
        <taxon>Brucella/Ochrobactrum group</taxon>
        <taxon>Brucella</taxon>
    </lineage>
</organism>
<keyword id="KW-0004">4Fe-4S</keyword>
<keyword id="KW-0997">Cell inner membrane</keyword>
<keyword id="KW-1003">Cell membrane</keyword>
<keyword id="KW-0408">Iron</keyword>
<keyword id="KW-0411">Iron-sulfur</keyword>
<keyword id="KW-0472">Membrane</keyword>
<keyword id="KW-0479">Metal-binding</keyword>
<keyword id="KW-0520">NAD</keyword>
<keyword id="KW-0874">Quinone</keyword>
<keyword id="KW-1185">Reference proteome</keyword>
<keyword id="KW-1278">Translocase</keyword>
<keyword id="KW-0813">Transport</keyword>
<keyword id="KW-0830">Ubiquinone</keyword>
<gene>
    <name evidence="2" type="primary">nuoB</name>
    <name type="ordered locus">BAB1_0823</name>
</gene>
<comment type="function">
    <text evidence="1">NDH-1 shuttles electrons from NADH, via FMN and iron-sulfur (Fe-S) centers, to quinones in the respiratory chain. Couples the redox reaction to proton translocation (for every two electrons transferred, four hydrogen ions are translocated across the cytoplasmic membrane), and thus conserves the redox energy in a proton gradient (By similarity).</text>
</comment>
<comment type="catalytic activity">
    <reaction evidence="2">
        <text>a quinone + NADH + 5 H(+)(in) = a quinol + NAD(+) + 4 H(+)(out)</text>
        <dbReference type="Rhea" id="RHEA:57888"/>
        <dbReference type="ChEBI" id="CHEBI:15378"/>
        <dbReference type="ChEBI" id="CHEBI:24646"/>
        <dbReference type="ChEBI" id="CHEBI:57540"/>
        <dbReference type="ChEBI" id="CHEBI:57945"/>
        <dbReference type="ChEBI" id="CHEBI:132124"/>
    </reaction>
</comment>
<comment type="cofactor">
    <cofactor evidence="2">
        <name>[4Fe-4S] cluster</name>
        <dbReference type="ChEBI" id="CHEBI:49883"/>
    </cofactor>
    <text evidence="2">Binds 1 [4Fe-4S] cluster.</text>
</comment>
<comment type="subunit">
    <text evidence="2">NDH-1 is composed of 14 different subunits. Subunits NuoB, C, D, E, F, and G constitute the peripheral sector of the complex.</text>
</comment>
<comment type="subcellular location">
    <subcellularLocation>
        <location evidence="2">Cell inner membrane</location>
        <topology evidence="2">Peripheral membrane protein</topology>
        <orientation evidence="2">Cytoplasmic side</orientation>
    </subcellularLocation>
</comment>
<comment type="similarity">
    <text evidence="2">Belongs to the complex I 20 kDa subunit family.</text>
</comment>
<name>NUOB_BRUA2</name>